<accession>P07703</accession>
<accession>D6W4A9</accession>
<keyword id="KW-0002">3D-structure</keyword>
<keyword id="KW-0007">Acetylation</keyword>
<keyword id="KW-0240">DNA-directed RNA polymerase</keyword>
<keyword id="KW-0539">Nucleus</keyword>
<keyword id="KW-0597">Phosphoprotein</keyword>
<keyword id="KW-1185">Reference proteome</keyword>
<keyword id="KW-0690">Ribosome biogenesis</keyword>
<keyword id="KW-0804">Transcription</keyword>
<dbReference type="EMBL" id="M15499">
    <property type="protein sequence ID" value="AAA34999.1"/>
    <property type="molecule type" value="Genomic_DNA"/>
</dbReference>
<dbReference type="EMBL" id="U32445">
    <property type="protein sequence ID" value="AAB68080.1"/>
    <property type="molecule type" value="Genomic_DNA"/>
</dbReference>
<dbReference type="EMBL" id="BK006949">
    <property type="protein sequence ID" value="DAA11525.1"/>
    <property type="molecule type" value="Genomic_DNA"/>
</dbReference>
<dbReference type="PIR" id="A25968">
    <property type="entry name" value="A25968"/>
</dbReference>
<dbReference type="RefSeq" id="NP_015435.1">
    <property type="nucleotide sequence ID" value="NM_001184207.1"/>
</dbReference>
<dbReference type="PDB" id="4C2M">
    <property type="method" value="X-ray"/>
    <property type="resolution" value="2.80 A"/>
    <property type="chains" value="C/R=1-335"/>
</dbReference>
<dbReference type="PDB" id="4C3H">
    <property type="method" value="X-ray"/>
    <property type="resolution" value="3.27 A"/>
    <property type="chains" value="C=1-335"/>
</dbReference>
<dbReference type="PDB" id="4C3I">
    <property type="method" value="X-ray"/>
    <property type="resolution" value="3.00 A"/>
    <property type="chains" value="C=1-335"/>
</dbReference>
<dbReference type="PDB" id="4C3J">
    <property type="method" value="X-ray"/>
    <property type="resolution" value="3.35 A"/>
    <property type="chains" value="C=1-335"/>
</dbReference>
<dbReference type="PDB" id="4YM7">
    <property type="method" value="X-ray"/>
    <property type="resolution" value="5.50 A"/>
    <property type="chains" value="AC/BC/CC/DC/EC/FC=1-335"/>
</dbReference>
<dbReference type="PDB" id="5FJ8">
    <property type="method" value="EM"/>
    <property type="resolution" value="3.90 A"/>
    <property type="chains" value="C=1-335"/>
</dbReference>
<dbReference type="PDB" id="5FJ9">
    <property type="method" value="EM"/>
    <property type="resolution" value="4.60 A"/>
    <property type="chains" value="C=1-335"/>
</dbReference>
<dbReference type="PDB" id="5FJA">
    <property type="method" value="EM"/>
    <property type="resolution" value="4.65 A"/>
    <property type="chains" value="C=1-335"/>
</dbReference>
<dbReference type="PDB" id="5G5L">
    <property type="method" value="EM"/>
    <property type="resolution" value="4.80 A"/>
    <property type="chains" value="C=1-335"/>
</dbReference>
<dbReference type="PDB" id="5LMX">
    <property type="method" value="EM"/>
    <property type="resolution" value="4.90 A"/>
    <property type="chains" value="C=1-335"/>
</dbReference>
<dbReference type="PDB" id="5M3F">
    <property type="method" value="EM"/>
    <property type="resolution" value="3.80 A"/>
    <property type="chains" value="C=1-335"/>
</dbReference>
<dbReference type="PDB" id="5M3M">
    <property type="method" value="EM"/>
    <property type="resolution" value="4.00 A"/>
    <property type="chains" value="C=1-335"/>
</dbReference>
<dbReference type="PDB" id="5M5W">
    <property type="method" value="EM"/>
    <property type="resolution" value="3.80 A"/>
    <property type="chains" value="C=1-335"/>
</dbReference>
<dbReference type="PDB" id="5M5X">
    <property type="method" value="EM"/>
    <property type="resolution" value="4.00 A"/>
    <property type="chains" value="C=1-335"/>
</dbReference>
<dbReference type="PDB" id="5M5Y">
    <property type="method" value="EM"/>
    <property type="resolution" value="4.00 A"/>
    <property type="chains" value="C=1-335"/>
</dbReference>
<dbReference type="PDB" id="5M64">
    <property type="method" value="EM"/>
    <property type="resolution" value="4.60 A"/>
    <property type="chains" value="C=1-335"/>
</dbReference>
<dbReference type="PDB" id="5N5Y">
    <property type="method" value="EM"/>
    <property type="resolution" value="7.70 A"/>
    <property type="chains" value="C=1-335"/>
</dbReference>
<dbReference type="PDB" id="5N5Z">
    <property type="method" value="EM"/>
    <property type="resolution" value="7.70 A"/>
    <property type="chains" value="C=1-335"/>
</dbReference>
<dbReference type="PDB" id="5N60">
    <property type="method" value="EM"/>
    <property type="resolution" value="7.70 A"/>
    <property type="chains" value="C=1-335"/>
</dbReference>
<dbReference type="PDB" id="5N61">
    <property type="method" value="EM"/>
    <property type="resolution" value="3.40 A"/>
    <property type="chains" value="C=1-335"/>
</dbReference>
<dbReference type="PDB" id="5OA1">
    <property type="method" value="EM"/>
    <property type="resolution" value="4.40 A"/>
    <property type="chains" value="C=1-335"/>
</dbReference>
<dbReference type="PDB" id="5W5Y">
    <property type="method" value="EM"/>
    <property type="resolution" value="3.80 A"/>
    <property type="chains" value="C=1-335"/>
</dbReference>
<dbReference type="PDB" id="5W64">
    <property type="method" value="EM"/>
    <property type="resolution" value="4.20 A"/>
    <property type="chains" value="C=1-335"/>
</dbReference>
<dbReference type="PDB" id="5W65">
    <property type="method" value="EM"/>
    <property type="resolution" value="4.30 A"/>
    <property type="chains" value="C=1-335"/>
</dbReference>
<dbReference type="PDB" id="5W66">
    <property type="method" value="EM"/>
    <property type="resolution" value="3.90 A"/>
    <property type="chains" value="C=1-335"/>
</dbReference>
<dbReference type="PDB" id="6CNB">
    <property type="method" value="EM"/>
    <property type="resolution" value="4.10 A"/>
    <property type="chains" value="C=1-335"/>
</dbReference>
<dbReference type="PDB" id="6CNC">
    <property type="method" value="EM"/>
    <property type="resolution" value="4.10 A"/>
    <property type="chains" value="C=1-335"/>
</dbReference>
<dbReference type="PDB" id="6CND">
    <property type="method" value="EM"/>
    <property type="resolution" value="4.80 A"/>
    <property type="chains" value="C=1-335"/>
</dbReference>
<dbReference type="PDB" id="6CNF">
    <property type="method" value="EM"/>
    <property type="resolution" value="4.50 A"/>
    <property type="chains" value="C=1-335"/>
</dbReference>
<dbReference type="PDB" id="6EU0">
    <property type="method" value="EM"/>
    <property type="resolution" value="4.00 A"/>
    <property type="chains" value="C=1-335"/>
</dbReference>
<dbReference type="PDB" id="6EU1">
    <property type="method" value="EM"/>
    <property type="resolution" value="3.40 A"/>
    <property type="chains" value="C=1-335"/>
</dbReference>
<dbReference type="PDB" id="6EU2">
    <property type="method" value="EM"/>
    <property type="resolution" value="3.40 A"/>
    <property type="chains" value="C=1-335"/>
</dbReference>
<dbReference type="PDB" id="6EU3">
    <property type="method" value="EM"/>
    <property type="resolution" value="3.30 A"/>
    <property type="chains" value="C=1-335"/>
</dbReference>
<dbReference type="PDB" id="6F40">
    <property type="method" value="EM"/>
    <property type="resolution" value="3.70 A"/>
    <property type="chains" value="C=1-335"/>
</dbReference>
<dbReference type="PDB" id="6F41">
    <property type="method" value="EM"/>
    <property type="resolution" value="4.30 A"/>
    <property type="chains" value="C=1-335"/>
</dbReference>
<dbReference type="PDB" id="6F42">
    <property type="method" value="EM"/>
    <property type="resolution" value="5.50 A"/>
    <property type="chains" value="C=1-335"/>
</dbReference>
<dbReference type="PDB" id="6F44">
    <property type="method" value="EM"/>
    <property type="resolution" value="4.20 A"/>
    <property type="chains" value="C=1-335"/>
</dbReference>
<dbReference type="PDB" id="6H67">
    <property type="method" value="EM"/>
    <property type="resolution" value="3.60 A"/>
    <property type="chains" value="C=1-335"/>
</dbReference>
<dbReference type="PDB" id="6H68">
    <property type="method" value="EM"/>
    <property type="resolution" value="4.60 A"/>
    <property type="chains" value="C=1-335"/>
</dbReference>
<dbReference type="PDB" id="6HKO">
    <property type="method" value="EM"/>
    <property type="resolution" value="3.42 A"/>
    <property type="chains" value="C=1-335"/>
</dbReference>
<dbReference type="PDB" id="6HLQ">
    <property type="method" value="EM"/>
    <property type="resolution" value="3.18 A"/>
    <property type="chains" value="C=1-335"/>
</dbReference>
<dbReference type="PDB" id="6HLR">
    <property type="method" value="EM"/>
    <property type="resolution" value="3.18 A"/>
    <property type="chains" value="C=1-335"/>
</dbReference>
<dbReference type="PDB" id="6HLS">
    <property type="method" value="EM"/>
    <property type="resolution" value="3.21 A"/>
    <property type="chains" value="C=1-335"/>
</dbReference>
<dbReference type="PDB" id="6RQH">
    <property type="method" value="EM"/>
    <property type="resolution" value="3.70 A"/>
    <property type="chains" value="C=1-335"/>
</dbReference>
<dbReference type="PDB" id="6RQL">
    <property type="method" value="EM"/>
    <property type="resolution" value="2.90 A"/>
    <property type="chains" value="C=1-335"/>
</dbReference>
<dbReference type="PDB" id="6RQT">
    <property type="method" value="EM"/>
    <property type="resolution" value="4.00 A"/>
    <property type="chains" value="C=1-335"/>
</dbReference>
<dbReference type="PDB" id="6RRD">
    <property type="method" value="EM"/>
    <property type="resolution" value="3.10 A"/>
    <property type="chains" value="C=1-335"/>
</dbReference>
<dbReference type="PDB" id="6RUI">
    <property type="method" value="EM"/>
    <property type="resolution" value="2.70 A"/>
    <property type="chains" value="C=1-335"/>
</dbReference>
<dbReference type="PDB" id="6RUO">
    <property type="method" value="EM"/>
    <property type="resolution" value="3.50 A"/>
    <property type="chains" value="C=1-335"/>
</dbReference>
<dbReference type="PDB" id="6RWE">
    <property type="method" value="EM"/>
    <property type="resolution" value="3.00 A"/>
    <property type="chains" value="C=1-335"/>
</dbReference>
<dbReference type="PDB" id="6TPS">
    <property type="method" value="EM"/>
    <property type="resolution" value="3.54 A"/>
    <property type="chains" value="C=1-335"/>
</dbReference>
<dbReference type="PDB" id="6TUT">
    <property type="method" value="EM"/>
    <property type="resolution" value="3.25 A"/>
    <property type="chains" value="C=1-335"/>
</dbReference>
<dbReference type="PDB" id="7Z0H">
    <property type="method" value="EM"/>
    <property type="resolution" value="2.60 A"/>
    <property type="chains" value="C=1-335"/>
</dbReference>
<dbReference type="PDB" id="7Z1L">
    <property type="method" value="EM"/>
    <property type="resolution" value="2.80 A"/>
    <property type="chains" value="C=1-335"/>
</dbReference>
<dbReference type="PDB" id="7Z1M">
    <property type="method" value="EM"/>
    <property type="resolution" value="3.40 A"/>
    <property type="chains" value="C=1-335"/>
</dbReference>
<dbReference type="PDB" id="7Z1N">
    <property type="method" value="EM"/>
    <property type="resolution" value="3.90 A"/>
    <property type="chains" value="C=1-335"/>
</dbReference>
<dbReference type="PDB" id="7Z1O">
    <property type="method" value="EM"/>
    <property type="resolution" value="2.70 A"/>
    <property type="chains" value="C=1-335"/>
</dbReference>
<dbReference type="PDB" id="7Z2Z">
    <property type="method" value="EM"/>
    <property type="resolution" value="3.07 A"/>
    <property type="chains" value="C=1-335"/>
</dbReference>
<dbReference type="PDB" id="7Z30">
    <property type="method" value="EM"/>
    <property type="resolution" value="2.90 A"/>
    <property type="chains" value="C=1-335"/>
</dbReference>
<dbReference type="PDB" id="7Z31">
    <property type="method" value="EM"/>
    <property type="resolution" value="2.76 A"/>
    <property type="chains" value="C=1-335"/>
</dbReference>
<dbReference type="PDB" id="8BWS">
    <property type="method" value="EM"/>
    <property type="resolution" value="3.20 A"/>
    <property type="chains" value="C=1-335"/>
</dbReference>
<dbReference type="PDBsum" id="4C2M"/>
<dbReference type="PDBsum" id="4C3H"/>
<dbReference type="PDBsum" id="4C3I"/>
<dbReference type="PDBsum" id="4C3J"/>
<dbReference type="PDBsum" id="4YM7"/>
<dbReference type="PDBsum" id="5FJ8"/>
<dbReference type="PDBsum" id="5FJ9"/>
<dbReference type="PDBsum" id="5FJA"/>
<dbReference type="PDBsum" id="5G5L"/>
<dbReference type="PDBsum" id="5LMX"/>
<dbReference type="PDBsum" id="5M3F"/>
<dbReference type="PDBsum" id="5M3M"/>
<dbReference type="PDBsum" id="5M5W"/>
<dbReference type="PDBsum" id="5M5X"/>
<dbReference type="PDBsum" id="5M5Y"/>
<dbReference type="PDBsum" id="5M64"/>
<dbReference type="PDBsum" id="5N5Y"/>
<dbReference type="PDBsum" id="5N5Z"/>
<dbReference type="PDBsum" id="5N60"/>
<dbReference type="PDBsum" id="5N61"/>
<dbReference type="PDBsum" id="5OA1"/>
<dbReference type="PDBsum" id="5W5Y"/>
<dbReference type="PDBsum" id="5W64"/>
<dbReference type="PDBsum" id="5W65"/>
<dbReference type="PDBsum" id="5W66"/>
<dbReference type="PDBsum" id="6CNB"/>
<dbReference type="PDBsum" id="6CNC"/>
<dbReference type="PDBsum" id="6CND"/>
<dbReference type="PDBsum" id="6CNF"/>
<dbReference type="PDBsum" id="6EU0"/>
<dbReference type="PDBsum" id="6EU1"/>
<dbReference type="PDBsum" id="6EU2"/>
<dbReference type="PDBsum" id="6EU3"/>
<dbReference type="PDBsum" id="6F40"/>
<dbReference type="PDBsum" id="6F41"/>
<dbReference type="PDBsum" id="6F42"/>
<dbReference type="PDBsum" id="6F44"/>
<dbReference type="PDBsum" id="6H67"/>
<dbReference type="PDBsum" id="6H68"/>
<dbReference type="PDBsum" id="6HKO"/>
<dbReference type="PDBsum" id="6HLQ"/>
<dbReference type="PDBsum" id="6HLR"/>
<dbReference type="PDBsum" id="6HLS"/>
<dbReference type="PDBsum" id="6RQH"/>
<dbReference type="PDBsum" id="6RQL"/>
<dbReference type="PDBsum" id="6RQT"/>
<dbReference type="PDBsum" id="6RRD"/>
<dbReference type="PDBsum" id="6RUI"/>
<dbReference type="PDBsum" id="6RUO"/>
<dbReference type="PDBsum" id="6RWE"/>
<dbReference type="PDBsum" id="6TPS"/>
<dbReference type="PDBsum" id="6TUT"/>
<dbReference type="PDBsum" id="7Z0H"/>
<dbReference type="PDBsum" id="7Z1L"/>
<dbReference type="PDBsum" id="7Z1M"/>
<dbReference type="PDBsum" id="7Z1N"/>
<dbReference type="PDBsum" id="7Z1O"/>
<dbReference type="PDBsum" id="7Z2Z"/>
<dbReference type="PDBsum" id="7Z30"/>
<dbReference type="PDBsum" id="7Z31"/>
<dbReference type="PDBsum" id="8BWS"/>
<dbReference type="EMDB" id="EMD-0146"/>
<dbReference type="EMDB" id="EMD-0147"/>
<dbReference type="EMDB" id="EMD-0238"/>
<dbReference type="EMDB" id="EMD-0239"/>
<dbReference type="EMDB" id="EMD-0240"/>
<dbReference type="EMDB" id="EMD-0241"/>
<dbReference type="EMDB" id="EMD-10006"/>
<dbReference type="EMDB" id="EMD-10007"/>
<dbReference type="EMDB" id="EMD-10038"/>
<dbReference type="EMDB" id="EMD-10544"/>
<dbReference type="EMDB" id="EMD-10595"/>
<dbReference type="EMDB" id="EMD-14421"/>
<dbReference type="EMDB" id="EMD-14447"/>
<dbReference type="EMDB" id="EMD-14448"/>
<dbReference type="EMDB" id="EMD-14449"/>
<dbReference type="EMDB" id="EMD-14451"/>
<dbReference type="EMDB" id="EMD-14468"/>
<dbReference type="EMDB" id="EMD-14469"/>
<dbReference type="EMDB" id="EMD-14470"/>
<dbReference type="EMDB" id="EMD-16299"/>
<dbReference type="EMDB" id="EMD-3446"/>
<dbReference type="EMDB" id="EMD-3447"/>
<dbReference type="EMDB" id="EMD-3448"/>
<dbReference type="EMDB" id="EMD-3449"/>
<dbReference type="EMDB" id="EMD-3590"/>
<dbReference type="EMDB" id="EMD-3591"/>
<dbReference type="EMDB" id="EMD-3592"/>
<dbReference type="EMDB" id="EMD-3593"/>
<dbReference type="EMDB" id="EMD-3727"/>
<dbReference type="EMDB" id="EMD-3955"/>
<dbReference type="EMDB" id="EMD-3956"/>
<dbReference type="EMDB" id="EMD-3957"/>
<dbReference type="EMDB" id="EMD-3958"/>
<dbReference type="EMDB" id="EMD-4088"/>
<dbReference type="EMDB" id="EMD-4147"/>
<dbReference type="EMDB" id="EMD-4148"/>
<dbReference type="EMDB" id="EMD-4180"/>
<dbReference type="EMDB" id="EMD-4181"/>
<dbReference type="EMDB" id="EMD-4182"/>
<dbReference type="EMDB" id="EMD-4183"/>
<dbReference type="EMDB" id="EMD-4982"/>
<dbReference type="EMDB" id="EMD-4984"/>
<dbReference type="EMDB" id="EMD-4985"/>
<dbReference type="EMDB" id="EMD-4987"/>
<dbReference type="EMDB" id="EMD-7530"/>
<dbReference type="EMDB" id="EMD-7531"/>
<dbReference type="EMDB" id="EMD-7532"/>
<dbReference type="EMDB" id="EMD-7533"/>
<dbReference type="EMDB" id="EMD-8771"/>
<dbReference type="EMDB" id="EMD-8773"/>
<dbReference type="EMDB" id="EMD-8774"/>
<dbReference type="EMDB" id="EMD-8775"/>
<dbReference type="EMDB" id="EMD-8776"/>
<dbReference type="EMDB" id="EMD-8777"/>
<dbReference type="SMR" id="P07703"/>
<dbReference type="BioGRID" id="36277">
    <property type="interactions" value="278"/>
</dbReference>
<dbReference type="ComplexPortal" id="CPX-1664">
    <property type="entry name" value="DNA-directed RNA Polymerase I complex"/>
</dbReference>
<dbReference type="ComplexPortal" id="CPX-2660">
    <property type="entry name" value="DNA-directed RNA polymerase III complex"/>
</dbReference>
<dbReference type="DIP" id="DIP-17N"/>
<dbReference type="FunCoup" id="P07703">
    <property type="interactions" value="1221"/>
</dbReference>
<dbReference type="IntAct" id="P07703">
    <property type="interactions" value="165"/>
</dbReference>
<dbReference type="MINT" id="P07703"/>
<dbReference type="STRING" id="4932.YPR110C"/>
<dbReference type="iPTMnet" id="P07703"/>
<dbReference type="PaxDb" id="4932-YPR110C"/>
<dbReference type="PeptideAtlas" id="P07703"/>
<dbReference type="EnsemblFungi" id="YPR110C_mRNA">
    <property type="protein sequence ID" value="YPR110C"/>
    <property type="gene ID" value="YPR110C"/>
</dbReference>
<dbReference type="GeneID" id="856226"/>
<dbReference type="KEGG" id="sce:YPR110C"/>
<dbReference type="AGR" id="SGD:S000006314"/>
<dbReference type="SGD" id="S000006314">
    <property type="gene designation" value="RPC40"/>
</dbReference>
<dbReference type="VEuPathDB" id="FungiDB:YPR110C"/>
<dbReference type="eggNOG" id="KOG1521">
    <property type="taxonomic scope" value="Eukaryota"/>
</dbReference>
<dbReference type="GeneTree" id="ENSGT00950000183100"/>
<dbReference type="HOGENOM" id="CLU_038421_0_1_1"/>
<dbReference type="InParanoid" id="P07703"/>
<dbReference type="OMA" id="KKKCRAF"/>
<dbReference type="OrthoDB" id="270173at2759"/>
<dbReference type="BioCyc" id="YEAST:G3O-34250-MONOMER"/>
<dbReference type="Reactome" id="R-SCE-73762">
    <property type="pathway name" value="RNA Polymerase I Transcription Initiation"/>
</dbReference>
<dbReference type="Reactome" id="R-SCE-73772">
    <property type="pathway name" value="RNA Polymerase I Promoter Escape"/>
</dbReference>
<dbReference type="Reactome" id="R-SCE-76066">
    <property type="pathway name" value="RNA Polymerase III Transcription Initiation From Type 2 Promoter"/>
</dbReference>
<dbReference type="BioGRID-ORCS" id="856226">
    <property type="hits" value="7 hits in 10 CRISPR screens"/>
</dbReference>
<dbReference type="CD-CODE" id="BDAE0F88">
    <property type="entry name" value="Nucleolus"/>
</dbReference>
<dbReference type="CD-CODE" id="E03F929F">
    <property type="entry name" value="Stress granule"/>
</dbReference>
<dbReference type="EvolutionaryTrace" id="P07703"/>
<dbReference type="PRO" id="PR:P07703"/>
<dbReference type="Proteomes" id="UP000002311">
    <property type="component" value="Chromosome XVI"/>
</dbReference>
<dbReference type="RNAct" id="P07703">
    <property type="molecule type" value="protein"/>
</dbReference>
<dbReference type="GO" id="GO:0005654">
    <property type="term" value="C:nucleoplasm"/>
    <property type="evidence" value="ECO:0000304"/>
    <property type="project" value="Reactome"/>
</dbReference>
<dbReference type="GO" id="GO:0005634">
    <property type="term" value="C:nucleus"/>
    <property type="evidence" value="ECO:0000314"/>
    <property type="project" value="ComplexPortal"/>
</dbReference>
<dbReference type="GO" id="GO:0005736">
    <property type="term" value="C:RNA polymerase I complex"/>
    <property type="evidence" value="ECO:0000314"/>
    <property type="project" value="UniProtKB"/>
</dbReference>
<dbReference type="GO" id="GO:0005666">
    <property type="term" value="C:RNA polymerase III complex"/>
    <property type="evidence" value="ECO:0000314"/>
    <property type="project" value="SGD"/>
</dbReference>
<dbReference type="GO" id="GO:0003677">
    <property type="term" value="F:DNA binding"/>
    <property type="evidence" value="ECO:0007669"/>
    <property type="project" value="InterPro"/>
</dbReference>
<dbReference type="GO" id="GO:0003899">
    <property type="term" value="F:DNA-directed RNA polymerase activity"/>
    <property type="evidence" value="ECO:0000314"/>
    <property type="project" value="UniProtKB"/>
</dbReference>
<dbReference type="GO" id="GO:0046983">
    <property type="term" value="F:protein dimerization activity"/>
    <property type="evidence" value="ECO:0007669"/>
    <property type="project" value="InterPro"/>
</dbReference>
<dbReference type="GO" id="GO:0042790">
    <property type="term" value="P:nucleolar large rRNA transcription by RNA polymerase I"/>
    <property type="evidence" value="ECO:0000314"/>
    <property type="project" value="ComplexPortal"/>
</dbReference>
<dbReference type="GO" id="GO:0042254">
    <property type="term" value="P:ribosome biogenesis"/>
    <property type="evidence" value="ECO:0007669"/>
    <property type="project" value="UniProtKB-KW"/>
</dbReference>
<dbReference type="GO" id="GO:0006363">
    <property type="term" value="P:termination of RNA polymerase I transcription"/>
    <property type="evidence" value="ECO:0000314"/>
    <property type="project" value="ComplexPortal"/>
</dbReference>
<dbReference type="GO" id="GO:0006386">
    <property type="term" value="P:termination of RNA polymerase III transcription"/>
    <property type="evidence" value="ECO:0000314"/>
    <property type="project" value="ComplexPortal"/>
</dbReference>
<dbReference type="GO" id="GO:0006360">
    <property type="term" value="P:transcription by RNA polymerase I"/>
    <property type="evidence" value="ECO:0000314"/>
    <property type="project" value="UniProtKB"/>
</dbReference>
<dbReference type="GO" id="GO:0006383">
    <property type="term" value="P:transcription by RNA polymerase III"/>
    <property type="evidence" value="ECO:0000314"/>
    <property type="project" value="ComplexPortal"/>
</dbReference>
<dbReference type="GO" id="GO:0006362">
    <property type="term" value="P:transcription elongation by RNA polymerase I"/>
    <property type="evidence" value="ECO:0000314"/>
    <property type="project" value="ComplexPortal"/>
</dbReference>
<dbReference type="GO" id="GO:0006361">
    <property type="term" value="P:transcription initiation at RNA polymerase I promoter"/>
    <property type="evidence" value="ECO:0000314"/>
    <property type="project" value="ComplexPortal"/>
</dbReference>
<dbReference type="GO" id="GO:0006384">
    <property type="term" value="P:transcription initiation at RNA polymerase III promoter"/>
    <property type="evidence" value="ECO:0000314"/>
    <property type="project" value="ComplexPortal"/>
</dbReference>
<dbReference type="GO" id="GO:0042797">
    <property type="term" value="P:tRNA transcription by RNA polymerase III"/>
    <property type="evidence" value="ECO:0000314"/>
    <property type="project" value="SGD"/>
</dbReference>
<dbReference type="CDD" id="cd07032">
    <property type="entry name" value="RNAP_I_II_AC40"/>
    <property type="match status" value="1"/>
</dbReference>
<dbReference type="FunFam" id="2.170.120.12:FF:000003">
    <property type="entry name" value="Dna-directed rna polymerases i and iii subunit"/>
    <property type="match status" value="1"/>
</dbReference>
<dbReference type="FunFam" id="3.30.1360.10:FF:000005">
    <property type="entry name" value="Dna-directed rna polymerases i and iii subunit"/>
    <property type="match status" value="1"/>
</dbReference>
<dbReference type="Gene3D" id="2.170.120.12">
    <property type="entry name" value="DNA-directed RNA polymerase, insert domain"/>
    <property type="match status" value="1"/>
</dbReference>
<dbReference type="Gene3D" id="3.30.1360.10">
    <property type="entry name" value="RNA polymerase, RBP11-like subunit"/>
    <property type="match status" value="1"/>
</dbReference>
<dbReference type="HAMAP" id="MF_00320">
    <property type="entry name" value="RNApol_arch_Rpo3"/>
    <property type="match status" value="1"/>
</dbReference>
<dbReference type="InterPro" id="IPR001514">
    <property type="entry name" value="DNA-dir_RNA_pol_30-40kDasu_CS"/>
</dbReference>
<dbReference type="InterPro" id="IPR011262">
    <property type="entry name" value="DNA-dir_RNA_pol_insert"/>
</dbReference>
<dbReference type="InterPro" id="IPR011263">
    <property type="entry name" value="DNA-dir_RNA_pol_RpoA/D/Rpb3"/>
</dbReference>
<dbReference type="InterPro" id="IPR036603">
    <property type="entry name" value="RBP11-like"/>
</dbReference>
<dbReference type="InterPro" id="IPR022842">
    <property type="entry name" value="RNAP_Rpo3/Rpb3/RPAC1"/>
</dbReference>
<dbReference type="InterPro" id="IPR033901">
    <property type="entry name" value="RNAPI/III_AC40"/>
</dbReference>
<dbReference type="InterPro" id="IPR036643">
    <property type="entry name" value="RNApol_insert_sf"/>
</dbReference>
<dbReference type="InterPro" id="IPR050518">
    <property type="entry name" value="Rpo3/RPB3_RNA_Pol_subunit"/>
</dbReference>
<dbReference type="NCBIfam" id="NF001988">
    <property type="entry name" value="PRK00783.1"/>
    <property type="match status" value="1"/>
</dbReference>
<dbReference type="PANTHER" id="PTHR11800">
    <property type="entry name" value="DNA-DIRECTED RNA POLYMERASE"/>
    <property type="match status" value="1"/>
</dbReference>
<dbReference type="PANTHER" id="PTHR11800:SF13">
    <property type="entry name" value="DNA-DIRECTED RNA POLYMERASES I AND III SUBUNIT RPAC1"/>
    <property type="match status" value="1"/>
</dbReference>
<dbReference type="Pfam" id="PF01000">
    <property type="entry name" value="RNA_pol_A_bac"/>
    <property type="match status" value="1"/>
</dbReference>
<dbReference type="Pfam" id="PF01193">
    <property type="entry name" value="RNA_pol_L"/>
    <property type="match status" value="1"/>
</dbReference>
<dbReference type="SMART" id="SM00662">
    <property type="entry name" value="RPOLD"/>
    <property type="match status" value="1"/>
</dbReference>
<dbReference type="SUPFAM" id="SSF56553">
    <property type="entry name" value="Insert subdomain of RNA polymerase alpha subunit"/>
    <property type="match status" value="1"/>
</dbReference>
<dbReference type="SUPFAM" id="SSF55257">
    <property type="entry name" value="RBP11-like subunits of RNA polymerase"/>
    <property type="match status" value="1"/>
</dbReference>
<dbReference type="PROSITE" id="PS00446">
    <property type="entry name" value="RNA_POL_D_30KD"/>
    <property type="match status" value="1"/>
</dbReference>
<organism>
    <name type="scientific">Saccharomyces cerevisiae (strain ATCC 204508 / S288c)</name>
    <name type="common">Baker's yeast</name>
    <dbReference type="NCBI Taxonomy" id="559292"/>
    <lineage>
        <taxon>Eukaryota</taxon>
        <taxon>Fungi</taxon>
        <taxon>Dikarya</taxon>
        <taxon>Ascomycota</taxon>
        <taxon>Saccharomycotina</taxon>
        <taxon>Saccharomycetes</taxon>
        <taxon>Saccharomycetales</taxon>
        <taxon>Saccharomycetaceae</taxon>
        <taxon>Saccharomyces</taxon>
    </lineage>
</organism>
<feature type="initiator methionine" description="Removed" evidence="16">
    <location>
        <position position="1"/>
    </location>
</feature>
<feature type="chain" id="PRO_0000132742" description="DNA-directed RNA polymerases I and III subunit RPAC1">
    <location>
        <begin position="2"/>
        <end position="335"/>
    </location>
</feature>
<feature type="modified residue" description="N-acetylserine" evidence="16">
    <location>
        <position position="2"/>
    </location>
</feature>
<feature type="modified residue" description="Phosphoserine" evidence="15">
    <location>
        <position position="17"/>
    </location>
</feature>
<feature type="strand" evidence="20">
    <location>
        <begin position="3"/>
        <end position="7"/>
    </location>
</feature>
<feature type="strand" evidence="20">
    <location>
        <begin position="23"/>
        <end position="26"/>
    </location>
</feature>
<feature type="helix" evidence="19">
    <location>
        <begin position="34"/>
        <end position="39"/>
    </location>
</feature>
<feature type="strand" evidence="19">
    <location>
        <begin position="41"/>
        <end position="47"/>
    </location>
</feature>
<feature type="strand" evidence="19">
    <location>
        <begin position="52"/>
        <end position="58"/>
    </location>
</feature>
<feature type="helix" evidence="19">
    <location>
        <begin position="61"/>
        <end position="73"/>
    </location>
</feature>
<feature type="strand" evidence="19">
    <location>
        <begin position="77"/>
        <end position="88"/>
    </location>
</feature>
<feature type="strand" evidence="19">
    <location>
        <begin position="90"/>
        <end position="92"/>
    </location>
</feature>
<feature type="helix" evidence="19">
    <location>
        <begin position="94"/>
        <end position="102"/>
    </location>
</feature>
<feature type="strand" evidence="18">
    <location>
        <begin position="106"/>
        <end position="108"/>
    </location>
</feature>
<feature type="helix" evidence="17">
    <location>
        <begin position="110"/>
        <end position="112"/>
    </location>
</feature>
<feature type="strand" evidence="19">
    <location>
        <begin position="118"/>
        <end position="120"/>
    </location>
</feature>
<feature type="helix" evidence="19">
    <location>
        <begin position="122"/>
        <end position="125"/>
    </location>
</feature>
<feature type="turn" evidence="19">
    <location>
        <begin position="128"/>
        <end position="130"/>
    </location>
</feature>
<feature type="strand" evidence="19">
    <location>
        <begin position="132"/>
        <end position="139"/>
    </location>
</feature>
<feature type="turn" evidence="19">
    <location>
        <begin position="153"/>
        <end position="156"/>
    </location>
</feature>
<feature type="strand" evidence="19">
    <location>
        <begin position="157"/>
        <end position="159"/>
    </location>
</feature>
<feature type="strand" evidence="19">
    <location>
        <begin position="161"/>
        <end position="163"/>
    </location>
</feature>
<feature type="helix" evidence="19">
    <location>
        <begin position="164"/>
        <end position="166"/>
    </location>
</feature>
<feature type="strand" evidence="19">
    <location>
        <begin position="168"/>
        <end position="170"/>
    </location>
</feature>
<feature type="helix" evidence="19">
    <location>
        <begin position="173"/>
        <end position="176"/>
    </location>
</feature>
<feature type="strand" evidence="19">
    <location>
        <begin position="177"/>
        <end position="182"/>
    </location>
</feature>
<feature type="strand" evidence="19">
    <location>
        <begin position="186"/>
        <end position="188"/>
    </location>
</feature>
<feature type="strand" evidence="19">
    <location>
        <begin position="192"/>
        <end position="195"/>
    </location>
</feature>
<feature type="strand" evidence="19">
    <location>
        <begin position="201"/>
        <end position="211"/>
    </location>
</feature>
<feature type="turn" evidence="19">
    <location>
        <begin position="213"/>
        <end position="215"/>
    </location>
</feature>
<feature type="helix" evidence="19">
    <location>
        <begin position="217"/>
        <end position="219"/>
    </location>
</feature>
<feature type="strand" evidence="19">
    <location>
        <begin position="225"/>
        <end position="235"/>
    </location>
</feature>
<feature type="helix" evidence="19">
    <location>
        <begin position="242"/>
        <end position="248"/>
    </location>
</feature>
<feature type="turn" evidence="19">
    <location>
        <begin position="253"/>
        <end position="255"/>
    </location>
</feature>
<feature type="strand" evidence="17">
    <location>
        <begin position="256"/>
        <end position="258"/>
    </location>
</feature>
<feature type="turn" evidence="20">
    <location>
        <begin position="260"/>
        <end position="262"/>
    </location>
</feature>
<feature type="strand" evidence="19">
    <location>
        <begin position="265"/>
        <end position="268"/>
    </location>
</feature>
<feature type="helix" evidence="17">
    <location>
        <begin position="270"/>
        <end position="272"/>
    </location>
</feature>
<feature type="helix" evidence="19">
    <location>
        <begin position="278"/>
        <end position="281"/>
    </location>
</feature>
<feature type="strand" evidence="19">
    <location>
        <begin position="285"/>
        <end position="302"/>
    </location>
</feature>
<feature type="strand" evidence="19">
    <location>
        <begin position="306"/>
        <end position="308"/>
    </location>
</feature>
<feature type="helix" evidence="19">
    <location>
        <begin position="312"/>
        <end position="329"/>
    </location>
</feature>
<reference key="1">
    <citation type="journal article" date="1987" name="Cell">
        <title>RPC40, a unique gene for a subunit shared between yeast RNA polymerases A and C.</title>
        <authorList>
            <person name="Mann C."/>
            <person name="Buhler J.-M."/>
            <person name="Treich I."/>
            <person name="Sentenac A."/>
        </authorList>
    </citation>
    <scope>NUCLEOTIDE SEQUENCE [GENOMIC DNA]</scope>
</reference>
<reference key="2">
    <citation type="journal article" date="1997" name="Nature">
        <title>The nucleotide sequence of Saccharomyces cerevisiae chromosome XVI.</title>
        <authorList>
            <person name="Bussey H."/>
            <person name="Storms R.K."/>
            <person name="Ahmed A."/>
            <person name="Albermann K."/>
            <person name="Allen E."/>
            <person name="Ansorge W."/>
            <person name="Araujo R."/>
            <person name="Aparicio A."/>
            <person name="Barrell B.G."/>
            <person name="Badcock K."/>
            <person name="Benes V."/>
            <person name="Botstein D."/>
            <person name="Bowman S."/>
            <person name="Brueckner M."/>
            <person name="Carpenter J."/>
            <person name="Cherry J.M."/>
            <person name="Chung E."/>
            <person name="Churcher C.M."/>
            <person name="Coster F."/>
            <person name="Davis K."/>
            <person name="Davis R.W."/>
            <person name="Dietrich F.S."/>
            <person name="Delius H."/>
            <person name="DiPaolo T."/>
            <person name="Dubois E."/>
            <person name="Duesterhoeft A."/>
            <person name="Duncan M."/>
            <person name="Floeth M."/>
            <person name="Fortin N."/>
            <person name="Friesen J.D."/>
            <person name="Fritz C."/>
            <person name="Goffeau A."/>
            <person name="Hall J."/>
            <person name="Hebling U."/>
            <person name="Heumann K."/>
            <person name="Hilbert H."/>
            <person name="Hillier L.W."/>
            <person name="Hunicke-Smith S."/>
            <person name="Hyman R.W."/>
            <person name="Johnston M."/>
            <person name="Kalman S."/>
            <person name="Kleine K."/>
            <person name="Komp C."/>
            <person name="Kurdi O."/>
            <person name="Lashkari D."/>
            <person name="Lew H."/>
            <person name="Lin A."/>
            <person name="Lin D."/>
            <person name="Louis E.J."/>
            <person name="Marathe R."/>
            <person name="Messenguy F."/>
            <person name="Mewes H.-W."/>
            <person name="Mirtipati S."/>
            <person name="Moestl D."/>
            <person name="Mueller-Auer S."/>
            <person name="Namath A."/>
            <person name="Nentwich U."/>
            <person name="Oefner P."/>
            <person name="Pearson D."/>
            <person name="Petel F.X."/>
            <person name="Pohl T.M."/>
            <person name="Purnelle B."/>
            <person name="Rajandream M.A."/>
            <person name="Rechmann S."/>
            <person name="Rieger M."/>
            <person name="Riles L."/>
            <person name="Roberts D."/>
            <person name="Schaefer M."/>
            <person name="Scharfe M."/>
            <person name="Scherens B."/>
            <person name="Schramm S."/>
            <person name="Schroeder M."/>
            <person name="Sdicu A.-M."/>
            <person name="Tettelin H."/>
            <person name="Urrestarazu L.A."/>
            <person name="Ushinsky S."/>
            <person name="Vierendeels F."/>
            <person name="Vissers S."/>
            <person name="Voss H."/>
            <person name="Walsh S.V."/>
            <person name="Wambutt R."/>
            <person name="Wang Y."/>
            <person name="Wedler E."/>
            <person name="Wedler H."/>
            <person name="Winnett E."/>
            <person name="Zhong W.-W."/>
            <person name="Zollner A."/>
            <person name="Vo D.H."/>
            <person name="Hani J."/>
        </authorList>
    </citation>
    <scope>NUCLEOTIDE SEQUENCE [LARGE SCALE GENOMIC DNA]</scope>
    <source>
        <strain>ATCC 204508 / S288c</strain>
    </source>
</reference>
<reference key="3">
    <citation type="journal article" date="2014" name="G3 (Bethesda)">
        <title>The reference genome sequence of Saccharomyces cerevisiae: Then and now.</title>
        <authorList>
            <person name="Engel S.R."/>
            <person name="Dietrich F.S."/>
            <person name="Fisk D.G."/>
            <person name="Binkley G."/>
            <person name="Balakrishnan R."/>
            <person name="Costanzo M.C."/>
            <person name="Dwight S.S."/>
            <person name="Hitz B.C."/>
            <person name="Karra K."/>
            <person name="Nash R.S."/>
            <person name="Weng S."/>
            <person name="Wong E.D."/>
            <person name="Lloyd P."/>
            <person name="Skrzypek M.S."/>
            <person name="Miyasato S.R."/>
            <person name="Simison M."/>
            <person name="Cherry J.M."/>
        </authorList>
    </citation>
    <scope>GENOME REANNOTATION</scope>
    <source>
        <strain>ATCC 204508 / S288c</strain>
    </source>
</reference>
<reference key="4">
    <citation type="journal article" date="1993" name="Proc. Natl. Acad. Sci. U.S.A.">
        <title>Interactions between three common subunits of yeast RNA polymerases I and III.</title>
        <authorList>
            <person name="Lalo D."/>
            <person name="Carles C."/>
            <person name="Sentenac A."/>
            <person name="Thuriaux P."/>
        </authorList>
    </citation>
    <scope>ASSOCIATION WITH AC19</scope>
</reference>
<reference key="5">
    <citation type="journal article" date="1998" name="Cold Spring Harb. Symp. Quant. Biol.">
        <title>The yeast RNA polymerase III transcription machinery: a paradigm for eukaryotic gene activation.</title>
        <authorList>
            <person name="Chedin S."/>
            <person name="Ferri M.L."/>
            <person name="Peyroche G."/>
            <person name="Andrau J.-C."/>
            <person name="Jourdain S."/>
            <person name="Lefebvre O."/>
            <person name="Werner M."/>
            <person name="Carles C."/>
            <person name="Sentenac A."/>
        </authorList>
    </citation>
    <scope>REVIEW ON THE RNA POL III COMPLEX</scope>
    <scope>PHOSPHORYLATION</scope>
</reference>
<reference key="6">
    <citation type="journal article" date="1999" name="Proc. Natl. Acad. Sci. U.S.A.">
        <title>A protein-protein interaction map of yeast RNA polymerase III.</title>
        <authorList>
            <person name="Flores A."/>
            <person name="Briand J.-F."/>
            <person name="Gadal O."/>
            <person name="Andrau J.-C."/>
            <person name="Rubbi L."/>
            <person name="Van Mullem V."/>
            <person name="Boschiero C."/>
            <person name="Goussot M."/>
            <person name="Marck C."/>
            <person name="Carles C."/>
            <person name="Thuriaux P."/>
            <person name="Sentenac A."/>
            <person name="Werner M."/>
        </authorList>
    </citation>
    <scope>INTERACTION WITH C53</scope>
</reference>
<reference key="7">
    <citation type="journal article" date="2001" name="Proc. Natl. Acad. Sci. U.S.A.">
        <title>Differential roles of phosphorylation in the formation of transcriptional active RNA polymerase I.</title>
        <authorList>
            <person name="Fath S."/>
            <person name="Milkereit P."/>
            <person name="Peyroche G."/>
            <person name="Riva M."/>
            <person name="Carles C."/>
            <person name="Tschochner H."/>
        </authorList>
    </citation>
    <scope>IDENTIFICATION IN THE RNA POL I COMPLEX</scope>
</reference>
<reference key="8">
    <citation type="journal article" date="2002" name="Proc. Natl. Acad. Sci. U.S.A.">
        <title>The A14-A43 heterodimer subunit in yeast RNA pol I and their relationship to Rpb4-Rpb7 pol II subunits.</title>
        <authorList>
            <person name="Peyroche G."/>
            <person name="Levillain E."/>
            <person name="Siaut M."/>
            <person name="Callebaut I."/>
            <person name="Schultz P."/>
            <person name="Sentenac A."/>
            <person name="Riva M."/>
            <person name="Carles C."/>
        </authorList>
    </citation>
    <scope>IDENTIFICATION IN THE RNA POL I COMPLEX</scope>
</reference>
<reference key="9">
    <citation type="journal article" date="2003" name="Nature">
        <title>Global analysis of protein localization in budding yeast.</title>
        <authorList>
            <person name="Huh W.-K."/>
            <person name="Falvo J.V."/>
            <person name="Gerke L.C."/>
            <person name="Carroll A.S."/>
            <person name="Howson R.W."/>
            <person name="Weissman J.S."/>
            <person name="O'Shea E.K."/>
        </authorList>
    </citation>
    <scope>SUBCELLULAR LOCATION [LARGE SCALE ANALYSIS]</scope>
</reference>
<reference key="10">
    <citation type="journal article" date="2003" name="Nature">
        <title>Global analysis of protein expression in yeast.</title>
        <authorList>
            <person name="Ghaemmaghami S."/>
            <person name="Huh W.-K."/>
            <person name="Bower K."/>
            <person name="Howson R.W."/>
            <person name="Belle A."/>
            <person name="Dephoure N."/>
            <person name="O'Shea E.K."/>
            <person name="Weissman J.S."/>
        </authorList>
    </citation>
    <scope>LEVEL OF PROTEIN EXPRESSION [LARGE SCALE ANALYSIS]</scope>
</reference>
<reference key="11">
    <citation type="journal article" date="2008" name="Mol. Cell. Proteomics">
        <title>A multidimensional chromatography technology for in-depth phosphoproteome analysis.</title>
        <authorList>
            <person name="Albuquerque C.P."/>
            <person name="Smolka M.B."/>
            <person name="Payne S.H."/>
            <person name="Bafna V."/>
            <person name="Eng J."/>
            <person name="Zhou H."/>
        </authorList>
    </citation>
    <scope>IDENTIFICATION BY MASS SPECTROMETRY [LARGE SCALE ANALYSIS]</scope>
</reference>
<reference key="12">
    <citation type="journal article" date="2009" name="Science">
        <title>Global analysis of Cdk1 substrate phosphorylation sites provides insights into evolution.</title>
        <authorList>
            <person name="Holt L.J."/>
            <person name="Tuch B.B."/>
            <person name="Villen J."/>
            <person name="Johnson A.D."/>
            <person name="Gygi S.P."/>
            <person name="Morgan D.O."/>
        </authorList>
    </citation>
    <scope>PHOSPHORYLATION [LARGE SCALE ANALYSIS] AT SER-17</scope>
    <scope>IDENTIFICATION BY MASS SPECTROMETRY [LARGE SCALE ANALYSIS]</scope>
</reference>
<reference key="13">
    <citation type="journal article" date="2012" name="Proc. Natl. Acad. Sci. U.S.A.">
        <title>N-terminal acetylome analyses and functional insights of the N-terminal acetyltransferase NatB.</title>
        <authorList>
            <person name="Van Damme P."/>
            <person name="Lasa M."/>
            <person name="Polevoda B."/>
            <person name="Gazquez C."/>
            <person name="Elosegui-Artola A."/>
            <person name="Kim D.S."/>
            <person name="De Juan-Pardo E."/>
            <person name="Demeyer K."/>
            <person name="Hole K."/>
            <person name="Larrea E."/>
            <person name="Timmerman E."/>
            <person name="Prieto J."/>
            <person name="Arnesen T."/>
            <person name="Sherman F."/>
            <person name="Gevaert K."/>
            <person name="Aldabe R."/>
        </authorList>
    </citation>
    <scope>ACETYLATION [LARGE SCALE ANALYSIS] AT SER-2</scope>
    <scope>CLEAVAGE OF INITIATOR METHIONINE [LARGE SCALE ANALYSIS]</scope>
    <scope>IDENTIFICATION BY MASS SPECTROMETRY [LARGE SCALE ANALYSIS]</scope>
</reference>
<reference key="14">
    <citation type="journal article" date="2015" name="Science">
        <title>An RNA polymerase III subunit determines sites of retrotransposon integration.</title>
        <authorList>
            <person name="Bridier-Nahmias A."/>
            <person name="Tchalikian-Cosson A."/>
            <person name="Baller J.A."/>
            <person name="Menouni R."/>
            <person name="Fayol H."/>
            <person name="Flores A."/>
            <person name="Saib A."/>
            <person name="Werner M."/>
            <person name="Voytas D.F."/>
            <person name="Lesage P."/>
        </authorList>
    </citation>
    <scope>INTERACTION WITH TY1 INTEGRASE</scope>
    <scope>FUNCTION</scope>
</reference>
<reference key="15">
    <citation type="journal article" date="2007" name="Cell">
        <title>Functional architecture of RNA polymerase I.</title>
        <authorList>
            <person name="Kuhn C.D."/>
            <person name="Geiger S.R."/>
            <person name="Baumli S."/>
            <person name="Gartmann M."/>
            <person name="Gerber J."/>
            <person name="Jennebach S."/>
            <person name="Mielke T."/>
            <person name="Tschochner H."/>
            <person name="Beckmann R."/>
            <person name="Cramer P."/>
        </authorList>
    </citation>
    <scope>STRUCTURE BY ELECTRON MICROSCOPY (12.00 ANGSTROMS) OF THE POL I COMPLEX</scope>
    <scope>FUNCTION</scope>
    <scope>SUBUNIT</scope>
</reference>
<reference key="16">
    <citation type="journal article" date="2013" name="Nature">
        <title>Crystal structure of the 14-subunit RNA polymerase I.</title>
        <authorList>
            <person name="Fernandez-Tornero C."/>
            <person name="Moreno-Morcillo M."/>
            <person name="Rashid U.J."/>
            <person name="Taylor N.M."/>
            <person name="Ruiz F.M."/>
            <person name="Gruene T."/>
            <person name="Legrand P."/>
            <person name="Steuerwald U."/>
            <person name="Muller C.W."/>
        </authorList>
    </citation>
    <scope>X-RAY CRYSTALLOGRAPHY (3.0 ANGSTROMS) OF THE POL I COMPLEX</scope>
    <scope>FUNCTION</scope>
    <scope>SUBUNIT</scope>
</reference>
<reference key="17">
    <citation type="journal article" date="2013" name="Nature">
        <title>RNA polymerase I structure and transcription regulation.</title>
        <authorList>
            <person name="Engel C."/>
            <person name="Sainsbury S."/>
            <person name="Cheung A.C."/>
            <person name="Kostrewa D."/>
            <person name="Cramer P."/>
        </authorList>
    </citation>
    <scope>X-RAY CRYSTALLOGRAPHY (2.8 ANGSTROMS) OF THE POL I COMPLEX</scope>
    <scope>FUNCTION</scope>
    <scope>SUBUNIT</scope>
</reference>
<name>RPAC1_YEAST</name>
<evidence type="ECO:0000269" key="1">
    <source>
    </source>
</evidence>
<evidence type="ECO:0000269" key="2">
    <source>
    </source>
</evidence>
<evidence type="ECO:0000269" key="3">
    <source>
    </source>
</evidence>
<evidence type="ECO:0000269" key="4">
    <source>
    </source>
</evidence>
<evidence type="ECO:0000269" key="5">
    <source>
    </source>
</evidence>
<evidence type="ECO:0000269" key="6">
    <source>
    </source>
</evidence>
<evidence type="ECO:0000269" key="7">
    <source>
    </source>
</evidence>
<evidence type="ECO:0000269" key="8">
    <source>
    </source>
</evidence>
<evidence type="ECO:0000269" key="9">
    <source>
    </source>
</evidence>
<evidence type="ECO:0000269" key="10">
    <source>
    </source>
</evidence>
<evidence type="ECO:0000303" key="11">
    <source>
    </source>
</evidence>
<evidence type="ECO:0000305" key="12"/>
<evidence type="ECO:0000305" key="13">
    <source>
    </source>
</evidence>
<evidence type="ECO:0000312" key="14">
    <source>
        <dbReference type="SGD" id="S000006314"/>
    </source>
</evidence>
<evidence type="ECO:0007744" key="15">
    <source>
    </source>
</evidence>
<evidence type="ECO:0007744" key="16">
    <source>
    </source>
</evidence>
<evidence type="ECO:0007829" key="17">
    <source>
        <dbReference type="PDB" id="4C2M"/>
    </source>
</evidence>
<evidence type="ECO:0007829" key="18">
    <source>
        <dbReference type="PDB" id="6EU3"/>
    </source>
</evidence>
<evidence type="ECO:0007829" key="19">
    <source>
        <dbReference type="PDB" id="6RUI"/>
    </source>
</evidence>
<evidence type="ECO:0007829" key="20">
    <source>
        <dbReference type="PDB" id="7Z31"/>
    </source>
</evidence>
<proteinExistence type="evidence at protein level"/>
<sequence length="335" mass="37687">MSNIVGIEYNRVTNTTSTDFPGFSKDAENEWNVEKFKKDFEVNISSLDAREANFDLINIDTSIANAFRRIMISEVPSVAAEYVYFFNNTSVIQDEVLAHRIGLVPLKVDPDMLTWVDSNLPDDEKFTDENTIVLSLNVKCTRNPDAPKGSTDPKELYNNAHVYARDLKFEPQGRQSTTFADCPVVPADPDILLAKLRPGQEISLKAHCILGIGGDHAKFSPVSTASYRLLPQINILQPIKGESARRFQKCFPPGVIGIDEGSDEAYVKDARKDTVSREVLRYEEFADKVKLGRVRNHFIFNVESAGAMTPEEIFFKSVRILKNKAEYLKNCPITQ</sequence>
<protein>
    <recommendedName>
        <fullName evidence="12">DNA-directed RNA polymerases I and III subunit RPAC1</fullName>
        <shortName evidence="12">RNA polymerases I and III subunit AC1</shortName>
    </recommendedName>
    <alternativeName>
        <fullName>C37</fullName>
    </alternativeName>
    <alternativeName>
        <fullName evidence="11">DNA-directed RNA polymerases I and III 40 kDa polypeptide</fullName>
        <shortName evidence="11">AC40</shortName>
        <shortName evidence="12">C40</shortName>
    </alternativeName>
</protein>
<gene>
    <name evidence="11" type="primary">RPC40</name>
    <name evidence="14" type="synonym">RPC5</name>
    <name evidence="14" type="ordered locus">YPR110C</name>
    <name type="ORF">P8283.18</name>
</gene>
<comment type="function">
    <text evidence="6 7 8 9 13">DNA-dependent RNA polymerases catalyze the transcription of DNA into RNA using the four ribonucleoside triphosphates as substrates. Common component of RNA polymerases I (Pol I) and III (Pol III) which synthesize ribosomal RNA precursors and small RNAs, such as 5S rRNA and tRNAs, respectively. RPC40 is part of the polymerase core and may function as a clamp element that moves to open and close the cleft (PubMed:18160037, PubMed:24153182, PubMed:24153184). Plays an important role in targeting retrotransposons Ty integration upstream of pol III-transcribed genes such as tRNA genes, allowing Ty1, Ty2 and Ty4 to proliferate and yet minimizing genetic damage (PubMed:25931562).</text>
</comment>
<comment type="subunit">
    <text evidence="1 2 3 6 7 8 9 10 13">Component of the RNA polymerase I (Pol I) complex consisting of 14 subunits: RPA135, RPA190, RPC40, RPA14, RPB5, RPO26, RPA43, RPB8, RPA12, RPB10, RPC19, RPC10, RPA49 and RPA34 (PubMed:11717393, PubMed:12407181, PubMed:18160037, PubMed:24153182, PubMed:24153184, PubMed:8516295). The complex is composed of a horseshoe-shaped core containing ten subunits (RPA135, RPA190, RPB5, RPO26, RPB8, RPB10, RPC10, RPA12, RPC19 and RPC40) where RPA135 and RPA190 form the DNA-binding cleft. Outside of the core, RPA14 and RPA43 form the stalk that mediates interactions with transcription initiation factors and newly synthesized RNA. Component of the RNA polymerase III (Pol III) complex consisting of at least 17 subunits (PubMed:10384303, PubMed:10393904, PubMed:8516295). Interacts with the RPC19/RPAC2 (PubMed:8516295) and RPC53/RPC4 (PubMed:10393904). Interacts with retrotransposons Ty integrase, targeting Ty1, Ty2 and Ty4 integration upstream of pol III-transcribed genes (PubMed:25931562).</text>
</comment>
<comment type="interaction">
    <interactant intactId="EBI-15831">
        <id>P07703</id>
    </interactant>
    <interactant intactId="EBI-15730">
        <id>P10964</id>
        <label>RPA190</label>
    </interactant>
    <organismsDiffer>false</organismsDiffer>
    <experiments>5</experiments>
</comment>
<comment type="interaction">
    <interactant intactId="EBI-15831">
        <id>P07703</id>
    </interactant>
    <interactant intactId="EBI-15767">
        <id>P08518</id>
        <label>RPB2</label>
    </interactant>
    <organismsDiffer>false</organismsDiffer>
    <experiments>2</experiments>
</comment>
<comment type="interaction">
    <interactant intactId="EBI-15831">
        <id>P07703</id>
    </interactant>
    <interactant intactId="EBI-15794">
        <id>P20436</id>
        <label>RPB8</label>
    </interactant>
    <organismsDiffer>false</organismsDiffer>
    <experiments>4</experiments>
</comment>
<comment type="interaction">
    <interactant intactId="EBI-15831">
        <id>P07703</id>
    </interactant>
    <interactant intactId="EBI-25782">
        <id>P47076</id>
        <label>RPC17</label>
    </interactant>
    <organismsDiffer>false</organismsDiffer>
    <experiments>2</experiments>
</comment>
<comment type="interaction">
    <interactant intactId="EBI-15831">
        <id>P07703</id>
    </interactant>
    <interactant intactId="EBI-15846">
        <id>P28000</id>
        <label>RPC19</label>
    </interactant>
    <organismsDiffer>false</organismsDiffer>
    <experiments>6</experiments>
</comment>
<comment type="subcellular location">
    <subcellularLocation>
        <location evidence="4">Nucleus</location>
        <location evidence="4">Nucleolus</location>
    </subcellularLocation>
</comment>
<comment type="miscellaneous">
    <text evidence="5">Present with 13000 molecules/cell in log phase SD medium.</text>
</comment>
<comment type="similarity">
    <text evidence="12">Belongs to the archaeal Rpo3/eukaryotic RPB3 RNA polymerase subunit family.</text>
</comment>